<name>RSMG_HISS1</name>
<accession>Q0I5W5</accession>
<organism>
    <name type="scientific">Histophilus somni (strain 129Pt)</name>
    <name type="common">Haemophilus somnus</name>
    <dbReference type="NCBI Taxonomy" id="205914"/>
    <lineage>
        <taxon>Bacteria</taxon>
        <taxon>Pseudomonadati</taxon>
        <taxon>Pseudomonadota</taxon>
        <taxon>Gammaproteobacteria</taxon>
        <taxon>Pasteurellales</taxon>
        <taxon>Pasteurellaceae</taxon>
        <taxon>Histophilus</taxon>
    </lineage>
</organism>
<keyword id="KW-0963">Cytoplasm</keyword>
<keyword id="KW-0489">Methyltransferase</keyword>
<keyword id="KW-0698">rRNA processing</keyword>
<keyword id="KW-0949">S-adenosyl-L-methionine</keyword>
<keyword id="KW-0808">Transferase</keyword>
<reference key="1">
    <citation type="journal article" date="2007" name="J. Bacteriol.">
        <title>Complete genome sequence of Haemophilus somnus (Histophilus somni) strain 129Pt and comparison to Haemophilus ducreyi 35000HP and Haemophilus influenzae Rd.</title>
        <authorList>
            <person name="Challacombe J.F."/>
            <person name="Duncan A.J."/>
            <person name="Brettin T.S."/>
            <person name="Bruce D."/>
            <person name="Chertkov O."/>
            <person name="Detter J.C."/>
            <person name="Han C.S."/>
            <person name="Misra M."/>
            <person name="Richardson P."/>
            <person name="Tapia R."/>
            <person name="Thayer N."/>
            <person name="Xie G."/>
            <person name="Inzana T.J."/>
        </authorList>
    </citation>
    <scope>NUCLEOTIDE SEQUENCE [LARGE SCALE GENOMIC DNA]</scope>
    <source>
        <strain>129Pt</strain>
    </source>
</reference>
<gene>
    <name evidence="1" type="primary">rsmG</name>
    <name type="ordered locus">HS_1704</name>
</gene>
<comment type="function">
    <text evidence="1">Specifically methylates the N7 position of guanine in position 527 of 16S rRNA.</text>
</comment>
<comment type="catalytic activity">
    <reaction evidence="1">
        <text>guanosine(527) in 16S rRNA + S-adenosyl-L-methionine = N(7)-methylguanosine(527) in 16S rRNA + S-adenosyl-L-homocysteine</text>
        <dbReference type="Rhea" id="RHEA:42732"/>
        <dbReference type="Rhea" id="RHEA-COMP:10209"/>
        <dbReference type="Rhea" id="RHEA-COMP:10210"/>
        <dbReference type="ChEBI" id="CHEBI:57856"/>
        <dbReference type="ChEBI" id="CHEBI:59789"/>
        <dbReference type="ChEBI" id="CHEBI:74269"/>
        <dbReference type="ChEBI" id="CHEBI:74480"/>
        <dbReference type="EC" id="2.1.1.170"/>
    </reaction>
</comment>
<comment type="subcellular location">
    <subcellularLocation>
        <location evidence="1">Cytoplasm</location>
    </subcellularLocation>
</comment>
<comment type="similarity">
    <text evidence="1">Belongs to the methyltransferase superfamily. RNA methyltransferase RsmG family.</text>
</comment>
<proteinExistence type="inferred from homology"/>
<protein>
    <recommendedName>
        <fullName evidence="1">Ribosomal RNA small subunit methyltransferase G</fullName>
        <ecNumber evidence="1">2.1.1.170</ecNumber>
    </recommendedName>
    <alternativeName>
        <fullName evidence="1">16S rRNA 7-methylguanosine methyltransferase</fullName>
        <shortName evidence="1">16S rRNA m7G methyltransferase</shortName>
    </alternativeName>
</protein>
<evidence type="ECO:0000255" key="1">
    <source>
        <dbReference type="HAMAP-Rule" id="MF_00074"/>
    </source>
</evidence>
<feature type="chain" id="PRO_0000335358" description="Ribosomal RNA small subunit methyltransferase G">
    <location>
        <begin position="1"/>
        <end position="212"/>
    </location>
</feature>
<feature type="binding site" evidence="1">
    <location>
        <position position="72"/>
    </location>
    <ligand>
        <name>S-adenosyl-L-methionine</name>
        <dbReference type="ChEBI" id="CHEBI:59789"/>
    </ligand>
</feature>
<feature type="binding site" evidence="1">
    <location>
        <position position="77"/>
    </location>
    <ligand>
        <name>S-adenosyl-L-methionine</name>
        <dbReference type="ChEBI" id="CHEBI:59789"/>
    </ligand>
</feature>
<feature type="binding site" evidence="1">
    <location>
        <begin position="123"/>
        <end position="124"/>
    </location>
    <ligand>
        <name>S-adenosyl-L-methionine</name>
        <dbReference type="ChEBI" id="CHEBI:59789"/>
    </ligand>
</feature>
<feature type="binding site" evidence="1">
    <location>
        <position position="138"/>
    </location>
    <ligand>
        <name>S-adenosyl-L-methionine</name>
        <dbReference type="ChEBI" id="CHEBI:59789"/>
    </ligand>
</feature>
<sequence>MEKLNFLLKNTALLPTNLQKERLVQLVLLLNKWNKAYNLTSVRDPMEMLVKHILDSIVVSPYLQGNIFIDVGTGPGLPGLPLAIINPDKKFFLLDSLGKRISFIRNAVRELELTNVEPVLSRVEEFKPDHQFDGVLSRAFASLKDMTEWCQHLLTDQGFFYALKGQYNMEEVSALSAQFSVEKIIEMNVPELVGKRHLVLLKKIRINLMNYL</sequence>
<dbReference type="EC" id="2.1.1.170" evidence="1"/>
<dbReference type="EMBL" id="CP000436">
    <property type="protein sequence ID" value="ABI25972.1"/>
    <property type="molecule type" value="Genomic_DNA"/>
</dbReference>
<dbReference type="SMR" id="Q0I5W5"/>
<dbReference type="KEGG" id="hso:HS_1704"/>
<dbReference type="eggNOG" id="COG0357">
    <property type="taxonomic scope" value="Bacteria"/>
</dbReference>
<dbReference type="HOGENOM" id="CLU_065341_2_0_6"/>
<dbReference type="GO" id="GO:0005829">
    <property type="term" value="C:cytosol"/>
    <property type="evidence" value="ECO:0007669"/>
    <property type="project" value="TreeGrafter"/>
</dbReference>
<dbReference type="GO" id="GO:0070043">
    <property type="term" value="F:rRNA (guanine-N7-)-methyltransferase activity"/>
    <property type="evidence" value="ECO:0007669"/>
    <property type="project" value="UniProtKB-UniRule"/>
</dbReference>
<dbReference type="CDD" id="cd02440">
    <property type="entry name" value="AdoMet_MTases"/>
    <property type="match status" value="1"/>
</dbReference>
<dbReference type="Gene3D" id="3.40.50.150">
    <property type="entry name" value="Vaccinia Virus protein VP39"/>
    <property type="match status" value="1"/>
</dbReference>
<dbReference type="HAMAP" id="MF_00074">
    <property type="entry name" value="16SrRNA_methyltr_G"/>
    <property type="match status" value="1"/>
</dbReference>
<dbReference type="InterPro" id="IPR003682">
    <property type="entry name" value="rRNA_ssu_MeTfrase_G"/>
</dbReference>
<dbReference type="InterPro" id="IPR029063">
    <property type="entry name" value="SAM-dependent_MTases_sf"/>
</dbReference>
<dbReference type="NCBIfam" id="TIGR00138">
    <property type="entry name" value="rsmG_gidB"/>
    <property type="match status" value="1"/>
</dbReference>
<dbReference type="PANTHER" id="PTHR31760">
    <property type="entry name" value="S-ADENOSYL-L-METHIONINE-DEPENDENT METHYLTRANSFERASES SUPERFAMILY PROTEIN"/>
    <property type="match status" value="1"/>
</dbReference>
<dbReference type="PANTHER" id="PTHR31760:SF0">
    <property type="entry name" value="S-ADENOSYL-L-METHIONINE-DEPENDENT METHYLTRANSFERASES SUPERFAMILY PROTEIN"/>
    <property type="match status" value="1"/>
</dbReference>
<dbReference type="Pfam" id="PF02527">
    <property type="entry name" value="GidB"/>
    <property type="match status" value="1"/>
</dbReference>
<dbReference type="PIRSF" id="PIRSF003078">
    <property type="entry name" value="GidB"/>
    <property type="match status" value="1"/>
</dbReference>
<dbReference type="SUPFAM" id="SSF53335">
    <property type="entry name" value="S-adenosyl-L-methionine-dependent methyltransferases"/>
    <property type="match status" value="1"/>
</dbReference>